<keyword id="KW-0131">Cell cycle</keyword>
<keyword id="KW-0132">Cell division</keyword>
<keyword id="KW-0997">Cell inner membrane</keyword>
<keyword id="KW-1003">Cell membrane</keyword>
<keyword id="KW-0175">Coiled coil</keyword>
<keyword id="KW-0472">Membrane</keyword>
<keyword id="KW-1185">Reference proteome</keyword>
<keyword id="KW-0812">Transmembrane</keyword>
<keyword id="KW-1133">Transmembrane helix</keyword>
<dbReference type="EMBL" id="BX950851">
    <property type="protein sequence ID" value="CAG76434.1"/>
    <property type="molecule type" value="Genomic_DNA"/>
</dbReference>
<dbReference type="RefSeq" id="WP_011095039.1">
    <property type="nucleotide sequence ID" value="NC_004547.2"/>
</dbReference>
<dbReference type="SMR" id="Q6D1B2"/>
<dbReference type="STRING" id="218491.ECA3536"/>
<dbReference type="GeneID" id="57210210"/>
<dbReference type="KEGG" id="eca:ECA3536"/>
<dbReference type="eggNOG" id="COG2919">
    <property type="taxonomic scope" value="Bacteria"/>
</dbReference>
<dbReference type="HOGENOM" id="CLU_134863_5_2_6"/>
<dbReference type="OrthoDB" id="7061211at2"/>
<dbReference type="Proteomes" id="UP000007966">
    <property type="component" value="Chromosome"/>
</dbReference>
<dbReference type="GO" id="GO:0032153">
    <property type="term" value="C:cell division site"/>
    <property type="evidence" value="ECO:0007669"/>
    <property type="project" value="UniProtKB-UniRule"/>
</dbReference>
<dbReference type="GO" id="GO:0030428">
    <property type="term" value="C:cell septum"/>
    <property type="evidence" value="ECO:0007669"/>
    <property type="project" value="TreeGrafter"/>
</dbReference>
<dbReference type="GO" id="GO:0005886">
    <property type="term" value="C:plasma membrane"/>
    <property type="evidence" value="ECO:0007669"/>
    <property type="project" value="UniProtKB-SubCell"/>
</dbReference>
<dbReference type="GO" id="GO:0043093">
    <property type="term" value="P:FtsZ-dependent cytokinesis"/>
    <property type="evidence" value="ECO:0007669"/>
    <property type="project" value="UniProtKB-UniRule"/>
</dbReference>
<dbReference type="Gene3D" id="1.20.5.400">
    <property type="match status" value="1"/>
</dbReference>
<dbReference type="HAMAP" id="MF_00599">
    <property type="entry name" value="FtsB"/>
    <property type="match status" value="1"/>
</dbReference>
<dbReference type="InterPro" id="IPR023081">
    <property type="entry name" value="Cell_div_FtsB"/>
</dbReference>
<dbReference type="InterPro" id="IPR007060">
    <property type="entry name" value="FtsL/DivIC"/>
</dbReference>
<dbReference type="NCBIfam" id="NF002058">
    <property type="entry name" value="PRK00888.1"/>
    <property type="match status" value="1"/>
</dbReference>
<dbReference type="PANTHER" id="PTHR37485">
    <property type="entry name" value="CELL DIVISION PROTEIN FTSB"/>
    <property type="match status" value="1"/>
</dbReference>
<dbReference type="PANTHER" id="PTHR37485:SF1">
    <property type="entry name" value="CELL DIVISION PROTEIN FTSB"/>
    <property type="match status" value="1"/>
</dbReference>
<dbReference type="Pfam" id="PF04977">
    <property type="entry name" value="DivIC"/>
    <property type="match status" value="1"/>
</dbReference>
<comment type="function">
    <text evidence="1">Essential cell division protein. May link together the upstream cell division proteins, which are predominantly cytoplasmic, with the downstream cell division proteins, which are predominantly periplasmic.</text>
</comment>
<comment type="subunit">
    <text evidence="1">Part of a complex composed of FtsB, FtsL and FtsQ.</text>
</comment>
<comment type="subcellular location">
    <subcellularLocation>
        <location evidence="1">Cell inner membrane</location>
        <topology evidence="1">Single-pass type II membrane protein</topology>
    </subcellularLocation>
    <text evidence="1">Localizes to the division septum.</text>
</comment>
<comment type="similarity">
    <text evidence="1">Belongs to the FtsB family.</text>
</comment>
<accession>Q6D1B2</accession>
<organism>
    <name type="scientific">Pectobacterium atrosepticum (strain SCRI 1043 / ATCC BAA-672)</name>
    <name type="common">Erwinia carotovora subsp. atroseptica</name>
    <dbReference type="NCBI Taxonomy" id="218491"/>
    <lineage>
        <taxon>Bacteria</taxon>
        <taxon>Pseudomonadati</taxon>
        <taxon>Pseudomonadota</taxon>
        <taxon>Gammaproteobacteria</taxon>
        <taxon>Enterobacterales</taxon>
        <taxon>Pectobacteriaceae</taxon>
        <taxon>Pectobacterium</taxon>
    </lineage>
</organism>
<evidence type="ECO:0000255" key="1">
    <source>
        <dbReference type="HAMAP-Rule" id="MF_00599"/>
    </source>
</evidence>
<evidence type="ECO:0000256" key="2">
    <source>
        <dbReference type="SAM" id="MobiDB-lite"/>
    </source>
</evidence>
<feature type="chain" id="PRO_1000025700" description="Cell division protein FtsB">
    <location>
        <begin position="1"/>
        <end position="111"/>
    </location>
</feature>
<feature type="topological domain" description="Cytoplasmic" evidence="1">
    <location>
        <begin position="1"/>
        <end position="3"/>
    </location>
</feature>
<feature type="transmembrane region" description="Helical" evidence="1">
    <location>
        <begin position="4"/>
        <end position="21"/>
    </location>
</feature>
<feature type="topological domain" description="Periplasmic" evidence="1">
    <location>
        <begin position="22"/>
        <end position="111"/>
    </location>
</feature>
<feature type="region of interest" description="Disordered" evidence="2">
    <location>
        <begin position="88"/>
        <end position="111"/>
    </location>
</feature>
<feature type="coiled-coil region" evidence="1">
    <location>
        <begin position="33"/>
        <end position="63"/>
    </location>
</feature>
<feature type="compositionally biased region" description="Low complexity" evidence="2">
    <location>
        <begin position="97"/>
        <end position="111"/>
    </location>
</feature>
<proteinExistence type="inferred from homology"/>
<sequence length="111" mass="12568">MGKLTLLLLILLGWLQYSLWLGKNGIHDYVRVKDDVVVQQGNNAKLKDRNEQLFAEIDDLNGGQEAIEERARNELGMIKPGESFYRLVPESNHRNANTPSSTNTSSNNTQR</sequence>
<gene>
    <name evidence="1" type="primary">ftsB</name>
    <name type="ordered locus">ECA3536</name>
</gene>
<name>FTSB_PECAS</name>
<reference key="1">
    <citation type="journal article" date="2004" name="Proc. Natl. Acad. Sci. U.S.A.">
        <title>Genome sequence of the enterobacterial phytopathogen Erwinia carotovora subsp. atroseptica and characterization of virulence factors.</title>
        <authorList>
            <person name="Bell K.S."/>
            <person name="Sebaihia M."/>
            <person name="Pritchard L."/>
            <person name="Holden M.T.G."/>
            <person name="Hyman L.J."/>
            <person name="Holeva M.C."/>
            <person name="Thomson N.R."/>
            <person name="Bentley S.D."/>
            <person name="Churcher L.J.C."/>
            <person name="Mungall K."/>
            <person name="Atkin R."/>
            <person name="Bason N."/>
            <person name="Brooks K."/>
            <person name="Chillingworth T."/>
            <person name="Clark K."/>
            <person name="Doggett J."/>
            <person name="Fraser A."/>
            <person name="Hance Z."/>
            <person name="Hauser H."/>
            <person name="Jagels K."/>
            <person name="Moule S."/>
            <person name="Norbertczak H."/>
            <person name="Ormond D."/>
            <person name="Price C."/>
            <person name="Quail M.A."/>
            <person name="Sanders M."/>
            <person name="Walker D."/>
            <person name="Whitehead S."/>
            <person name="Salmond G.P.C."/>
            <person name="Birch P.R.J."/>
            <person name="Parkhill J."/>
            <person name="Toth I.K."/>
        </authorList>
    </citation>
    <scope>NUCLEOTIDE SEQUENCE [LARGE SCALE GENOMIC DNA]</scope>
    <source>
        <strain>SCRI 1043 / ATCC BAA-672</strain>
    </source>
</reference>
<protein>
    <recommendedName>
        <fullName evidence="1">Cell division protein FtsB</fullName>
    </recommendedName>
</protein>